<dbReference type="EMBL" id="CP000825">
    <property type="protein sequence ID" value="ABV49898.1"/>
    <property type="molecule type" value="Genomic_DNA"/>
</dbReference>
<dbReference type="RefSeq" id="WP_012007057.1">
    <property type="nucleotide sequence ID" value="NC_009840.1"/>
</dbReference>
<dbReference type="SMR" id="A8G2R7"/>
<dbReference type="STRING" id="93060.P9215_02811"/>
<dbReference type="KEGG" id="pmh:P9215_02811"/>
<dbReference type="eggNOG" id="COG1058">
    <property type="taxonomic scope" value="Bacteria"/>
</dbReference>
<dbReference type="eggNOG" id="COG1546">
    <property type="taxonomic scope" value="Bacteria"/>
</dbReference>
<dbReference type="HOGENOM" id="CLU_030805_9_3_3"/>
<dbReference type="OrthoDB" id="9801454at2"/>
<dbReference type="Proteomes" id="UP000002014">
    <property type="component" value="Chromosome"/>
</dbReference>
<dbReference type="CDD" id="cd00885">
    <property type="entry name" value="cinA"/>
    <property type="match status" value="1"/>
</dbReference>
<dbReference type="Gene3D" id="3.30.70.2860">
    <property type="match status" value="1"/>
</dbReference>
<dbReference type="Gene3D" id="3.90.950.20">
    <property type="entry name" value="CinA-like"/>
    <property type="match status" value="1"/>
</dbReference>
<dbReference type="Gene3D" id="3.40.980.10">
    <property type="entry name" value="MoaB/Mog-like domain"/>
    <property type="match status" value="1"/>
</dbReference>
<dbReference type="HAMAP" id="MF_00226_B">
    <property type="entry name" value="CinA_B"/>
    <property type="match status" value="1"/>
</dbReference>
<dbReference type="InterPro" id="IPR050101">
    <property type="entry name" value="CinA"/>
</dbReference>
<dbReference type="InterPro" id="IPR036653">
    <property type="entry name" value="CinA-like_C"/>
</dbReference>
<dbReference type="InterPro" id="IPR008136">
    <property type="entry name" value="CinA_C"/>
</dbReference>
<dbReference type="InterPro" id="IPR041424">
    <property type="entry name" value="CinA_KH"/>
</dbReference>
<dbReference type="InterPro" id="IPR008135">
    <property type="entry name" value="Competence-induced_CinA"/>
</dbReference>
<dbReference type="InterPro" id="IPR036425">
    <property type="entry name" value="MoaB/Mog-like_dom_sf"/>
</dbReference>
<dbReference type="InterPro" id="IPR001453">
    <property type="entry name" value="MoaB/Mog_dom"/>
</dbReference>
<dbReference type="NCBIfam" id="TIGR00200">
    <property type="entry name" value="cinA_nterm"/>
    <property type="match status" value="1"/>
</dbReference>
<dbReference type="NCBIfam" id="TIGR00177">
    <property type="entry name" value="molyb_syn"/>
    <property type="match status" value="1"/>
</dbReference>
<dbReference type="NCBIfam" id="TIGR00199">
    <property type="entry name" value="PncC_domain"/>
    <property type="match status" value="1"/>
</dbReference>
<dbReference type="NCBIfam" id="NF001813">
    <property type="entry name" value="PRK00549.1"/>
    <property type="match status" value="1"/>
</dbReference>
<dbReference type="PANTHER" id="PTHR13939">
    <property type="entry name" value="NICOTINAMIDE-NUCLEOTIDE AMIDOHYDROLASE PNCC"/>
    <property type="match status" value="1"/>
</dbReference>
<dbReference type="PANTHER" id="PTHR13939:SF0">
    <property type="entry name" value="NMN AMIDOHYDROLASE-LIKE PROTEIN YFAY"/>
    <property type="match status" value="1"/>
</dbReference>
<dbReference type="Pfam" id="PF02464">
    <property type="entry name" value="CinA"/>
    <property type="match status" value="1"/>
</dbReference>
<dbReference type="Pfam" id="PF18146">
    <property type="entry name" value="CinA_KH"/>
    <property type="match status" value="1"/>
</dbReference>
<dbReference type="Pfam" id="PF00994">
    <property type="entry name" value="MoCF_biosynth"/>
    <property type="match status" value="1"/>
</dbReference>
<dbReference type="PIRSF" id="PIRSF006728">
    <property type="entry name" value="CinA"/>
    <property type="match status" value="1"/>
</dbReference>
<dbReference type="SMART" id="SM00852">
    <property type="entry name" value="MoCF_biosynth"/>
    <property type="match status" value="1"/>
</dbReference>
<dbReference type="SUPFAM" id="SSF142433">
    <property type="entry name" value="CinA-like"/>
    <property type="match status" value="1"/>
</dbReference>
<dbReference type="SUPFAM" id="SSF53218">
    <property type="entry name" value="Molybdenum cofactor biosynthesis proteins"/>
    <property type="match status" value="1"/>
</dbReference>
<feature type="chain" id="PRO_0000336518" description="CinA-like protein">
    <location>
        <begin position="1"/>
        <end position="424"/>
    </location>
</feature>
<reference key="1">
    <citation type="journal article" date="2007" name="PLoS Genet.">
        <title>Patterns and implications of gene gain and loss in the evolution of Prochlorococcus.</title>
        <authorList>
            <person name="Kettler G.C."/>
            <person name="Martiny A.C."/>
            <person name="Huang K."/>
            <person name="Zucker J."/>
            <person name="Coleman M.L."/>
            <person name="Rodrigue S."/>
            <person name="Chen F."/>
            <person name="Lapidus A."/>
            <person name="Ferriera S."/>
            <person name="Johnson J."/>
            <person name="Steglich C."/>
            <person name="Church G.M."/>
            <person name="Richardson P."/>
            <person name="Chisholm S.W."/>
        </authorList>
    </citation>
    <scope>NUCLEOTIDE SEQUENCE [LARGE SCALE GENOMIC DNA]</scope>
    <source>
        <strain>MIT 9215</strain>
    </source>
</reference>
<evidence type="ECO:0000255" key="1">
    <source>
        <dbReference type="HAMAP-Rule" id="MF_00226"/>
    </source>
</evidence>
<sequence>MSPNSKGVEILSIGTELLLGNITNTNAQWISEQLSQLGLNHFRQSTVGDNRDRIIKVIQEISQRSNLLITTGGLGPTPDDLTTEAIATSFNVSLFERPHLWDEIKQKTSNSKLQDNSSSLRKQCFFPKNAQIINNPRGTAPGMIWEPIKGFTILTFPGVPSEMKTMWKETAFDFIKTKFSDSYSFFSKTLKFSGIGESSVAEKINDLLNLKNPTVAPYANLGEVKLRITARAKNEVEAKNIIKPVKEKLKKKFPKFIFGEDNDTLPSVLIKELAKRNETIVFAESCTGGLLSSSITSISGSSQVFQGSIVSYSNELKNSLLNISEDNLKKYGAVSEEVCEAMAINIKNRLGADWAIGVSGIAGPNGGSQEKPVGLVYISIAGPNNHITNIKKKYNSTRNRIEIQTLSVNVCLNSLRLILLSNSK</sequence>
<protein>
    <recommendedName>
        <fullName evidence="1">CinA-like protein</fullName>
    </recommendedName>
</protein>
<gene>
    <name type="ordered locus">P9215_02811</name>
</gene>
<organism>
    <name type="scientific">Prochlorococcus marinus (strain MIT 9215)</name>
    <dbReference type="NCBI Taxonomy" id="93060"/>
    <lineage>
        <taxon>Bacteria</taxon>
        <taxon>Bacillati</taxon>
        <taxon>Cyanobacteriota</taxon>
        <taxon>Cyanophyceae</taxon>
        <taxon>Synechococcales</taxon>
        <taxon>Prochlorococcaceae</taxon>
        <taxon>Prochlorococcus</taxon>
    </lineage>
</organism>
<name>CINAL_PROM2</name>
<proteinExistence type="inferred from homology"/>
<accession>A8G2R7</accession>
<comment type="similarity">
    <text evidence="1">Belongs to the CinA family.</text>
</comment>